<name>FLAC_CAMJE</name>
<gene>
    <name type="primary">flaC</name>
    <name type="ordered locus">Cj0720c</name>
</gene>
<evidence type="ECO:0000269" key="1">
    <source>
    </source>
</evidence>
<evidence type="ECO:0000305" key="2"/>
<evidence type="ECO:0000305" key="3">
    <source>
    </source>
</evidence>
<feature type="chain" id="PRO_0000182599" description="Secreted flagellin C">
    <location>
        <begin position="1"/>
        <end position="249"/>
    </location>
</feature>
<feature type="sequence conflict" description="In Ref. 1; AAB48473." evidence="2" ref="1">
    <original>S</original>
    <variation>N</variation>
    <location>
        <position position="161"/>
    </location>
</feature>
<comment type="function">
    <text evidence="1">Plays a role in virulence.</text>
</comment>
<comment type="subcellular location">
    <subcellularLocation>
        <location evidence="1">Secreted</location>
    </subcellularLocation>
    <text evidence="1">Not detected in flagellar preparations, requires the flagellar export apparatus (FlgF) for secretion.</text>
</comment>
<comment type="subcellular location">
    <subcellularLocation>
        <location evidence="3">Host cell surface</location>
    </subcellularLocation>
    <text evidence="1">(Microbial infection) Binds to the surface of human HEp2 (ATCC CCL-23) cells.</text>
</comment>
<comment type="PTM">
    <text evidence="1">The secreted form is about 1 kDa larger than the whole cell lysate form, presumably due to post-translational modification. A 22 kDa form is also found in the secreted fraction, probably resulting from proteolysis.</text>
</comment>
<comment type="disruption phenotype">
    <text evidence="1">No visible effect on flagellar structure, cell shape or motility. Adheres to host epithelial cells (human HEp2) but invades less well (14% suriving bacteria, determined by bacterial counts from lysed cells after 2 hours of gentamicin treatment).</text>
</comment>
<reference key="1">
    <citation type="submission" date="1997-01" db="EMBL/GenBank/DDBJ databases">
        <title>A third flagellin gene (flaC) of Campylobacter jejuni.</title>
        <authorList>
            <person name="Chan V.L."/>
            <person name="Louie H."/>
            <person name="Ng D."/>
            <person name="Bingham H.L."/>
        </authorList>
    </citation>
    <scope>NUCLEOTIDE SEQUENCE [GENOMIC DNA]</scope>
</reference>
<reference key="2">
    <citation type="journal article" date="2000" name="Nature">
        <title>The genome sequence of the food-borne pathogen Campylobacter jejuni reveals hypervariable sequences.</title>
        <authorList>
            <person name="Parkhill J."/>
            <person name="Wren B.W."/>
            <person name="Mungall K.L."/>
            <person name="Ketley J.M."/>
            <person name="Churcher C.M."/>
            <person name="Basham D."/>
            <person name="Chillingworth T."/>
            <person name="Davies R.M."/>
            <person name="Feltwell T."/>
            <person name="Holroyd S."/>
            <person name="Jagels K."/>
            <person name="Karlyshev A.V."/>
            <person name="Moule S."/>
            <person name="Pallen M.J."/>
            <person name="Penn C.W."/>
            <person name="Quail M.A."/>
            <person name="Rajandream M.A."/>
            <person name="Rutherford K.M."/>
            <person name="van Vliet A.H.M."/>
            <person name="Whitehead S."/>
            <person name="Barrell B.G."/>
        </authorList>
    </citation>
    <scope>NUCLEOTIDE SEQUENCE [LARGE SCALE GENOMIC DNA]</scope>
    <source>
        <strain>ATCC 700819 / NCTC 11168</strain>
    </source>
</reference>
<reference key="3">
    <citation type="journal article" date="2004" name="Mol. Microbiol.">
        <title>FlaC, a protein of Campylobacter jejuni TGH9011 (ATCC43431) secreted through the flagellar apparatus, binds epithelial cells and influences cell invasion.</title>
        <authorList>
            <person name="Song Y.C."/>
            <person name="Jin S."/>
            <person name="Louie H."/>
            <person name="Ng D."/>
            <person name="Lau R."/>
            <person name="Zhang Y."/>
            <person name="Weerasekera R."/>
            <person name="Al Rashid S."/>
            <person name="Ward L.A."/>
            <person name="Der S.D."/>
            <person name="Chan V.L."/>
        </authorList>
    </citation>
    <scope>FUNCTION</scope>
    <scope>SUBCELLULAR LOCATION</scope>
    <scope>POST-TRANSLATIONAL MODIFICATION</scope>
    <scope>DISRUPTION PHENOTYPE</scope>
    <source>
        <strain>ATCC 43431 / TGH 9011</strain>
    </source>
</reference>
<sequence>MMISDATMMQQNYYLNNAQKASDKALENIAAVRAISGVDSANLAIADSLRSQSSTIDQGVANAYDAIGVLQIADASLTNISQSADRLNELSVKMNNAALNDSQKGMLRTEATRIQESINDSFNNATYNGKNVFQTMNFVVGSGTETTNLNPLATDGLSIDSQDSITNFMDQLGSLRSEIGSGINAITSNINASVQNSINSKAAENNLLNNDMAKNVNDFNANYLKENAAAFVAAQSNMQLQSKIANLLQ</sequence>
<proteinExistence type="predicted"/>
<organism>
    <name type="scientific">Campylobacter jejuni subsp. jejuni serotype O:2 (strain ATCC 700819 / NCTC 11168)</name>
    <dbReference type="NCBI Taxonomy" id="192222"/>
    <lineage>
        <taxon>Bacteria</taxon>
        <taxon>Pseudomonadati</taxon>
        <taxon>Campylobacterota</taxon>
        <taxon>Epsilonproteobacteria</taxon>
        <taxon>Campylobacterales</taxon>
        <taxon>Campylobacteraceae</taxon>
        <taxon>Campylobacter</taxon>
    </lineage>
</organism>
<keyword id="KW-1185">Reference proteome</keyword>
<keyword id="KW-0964">Secreted</keyword>
<keyword id="KW-0843">Virulence</keyword>
<dbReference type="EMBL" id="U85622">
    <property type="protein sequence ID" value="AAB48473.1"/>
    <property type="molecule type" value="Genomic_DNA"/>
</dbReference>
<dbReference type="EMBL" id="AL111168">
    <property type="protein sequence ID" value="CAL34857.1"/>
    <property type="molecule type" value="Genomic_DNA"/>
</dbReference>
<dbReference type="PIR" id="C81343">
    <property type="entry name" value="C81343"/>
</dbReference>
<dbReference type="RefSeq" id="WP_002858476.1">
    <property type="nucleotide sequence ID" value="NZ_SZUC01000002.1"/>
</dbReference>
<dbReference type="RefSeq" id="YP_002344138.1">
    <property type="nucleotide sequence ID" value="NC_002163.1"/>
</dbReference>
<dbReference type="SMR" id="P96747"/>
<dbReference type="IntAct" id="P96747">
    <property type="interactions" value="149"/>
</dbReference>
<dbReference type="STRING" id="192222.Cj0720c"/>
<dbReference type="PaxDb" id="192222-Cj0720c"/>
<dbReference type="EnsemblBacteria" id="CAL34857">
    <property type="protein sequence ID" value="CAL34857"/>
    <property type="gene ID" value="Cj0720c"/>
</dbReference>
<dbReference type="GeneID" id="905038"/>
<dbReference type="KEGG" id="cje:Cj0720c"/>
<dbReference type="PATRIC" id="fig|192222.6.peg.712"/>
<dbReference type="eggNOG" id="COG1344">
    <property type="taxonomic scope" value="Bacteria"/>
</dbReference>
<dbReference type="HOGENOM" id="CLU_097077_0_0_7"/>
<dbReference type="OrthoDB" id="5319985at2"/>
<dbReference type="Proteomes" id="UP000000799">
    <property type="component" value="Chromosome"/>
</dbReference>
<dbReference type="GO" id="GO:0009288">
    <property type="term" value="C:bacterial-type flagellum"/>
    <property type="evidence" value="ECO:0007669"/>
    <property type="project" value="InterPro"/>
</dbReference>
<dbReference type="GO" id="GO:0005576">
    <property type="term" value="C:extracellular region"/>
    <property type="evidence" value="ECO:0007669"/>
    <property type="project" value="UniProtKB-SubCell"/>
</dbReference>
<dbReference type="GO" id="GO:0044228">
    <property type="term" value="C:host cell surface"/>
    <property type="evidence" value="ECO:0007669"/>
    <property type="project" value="UniProtKB-SubCell"/>
</dbReference>
<dbReference type="GO" id="GO:0005198">
    <property type="term" value="F:structural molecule activity"/>
    <property type="evidence" value="ECO:0007669"/>
    <property type="project" value="InterPro"/>
</dbReference>
<dbReference type="Gene3D" id="1.20.1330.10">
    <property type="entry name" value="f41 fragment of flagellin, N-terminal domain"/>
    <property type="match status" value="1"/>
</dbReference>
<dbReference type="InterPro" id="IPR001492">
    <property type="entry name" value="Flagellin"/>
</dbReference>
<dbReference type="InterPro" id="IPR001029">
    <property type="entry name" value="Flagellin_N"/>
</dbReference>
<dbReference type="PANTHER" id="PTHR42792">
    <property type="entry name" value="FLAGELLIN"/>
    <property type="match status" value="1"/>
</dbReference>
<dbReference type="PANTHER" id="PTHR42792:SF2">
    <property type="entry name" value="FLAGELLIN"/>
    <property type="match status" value="1"/>
</dbReference>
<dbReference type="Pfam" id="PF00669">
    <property type="entry name" value="Flagellin_N"/>
    <property type="match status" value="1"/>
</dbReference>
<dbReference type="SUPFAM" id="SSF64518">
    <property type="entry name" value="Phase 1 flagellin"/>
    <property type="match status" value="1"/>
</dbReference>
<accession>P96747</accession>
<accession>Q0PAF9</accession>
<accession>Q9PPI7</accession>
<protein>
    <recommendedName>
        <fullName>Secreted flagellin C</fullName>
    </recommendedName>
</protein>